<keyword id="KW-0010">Activator</keyword>
<keyword id="KW-0238">DNA-binding</keyword>
<keyword id="KW-1185">Reference proteome</keyword>
<keyword id="KW-0804">Transcription</keyword>
<keyword id="KW-0805">Transcription regulation</keyword>
<keyword id="KW-0946">Virion</keyword>
<dbReference type="EMBL" id="AF170726">
    <property type="protein sequence ID" value="AAF14984.1"/>
    <property type="molecule type" value="Genomic_DNA"/>
</dbReference>
<dbReference type="RefSeq" id="NP_051810.1">
    <property type="nucleotide sequence ID" value="NC_001132.2"/>
</dbReference>
<dbReference type="SMR" id="Q9Q8K4"/>
<dbReference type="GeneID" id="932176"/>
<dbReference type="KEGG" id="vg:932176"/>
<dbReference type="Proteomes" id="UP000000867">
    <property type="component" value="Segment"/>
</dbReference>
<dbReference type="GO" id="GO:0044423">
    <property type="term" value="C:virion component"/>
    <property type="evidence" value="ECO:0007669"/>
    <property type="project" value="UniProtKB-KW"/>
</dbReference>
<dbReference type="GO" id="GO:0003677">
    <property type="term" value="F:DNA binding"/>
    <property type="evidence" value="ECO:0007669"/>
    <property type="project" value="UniProtKB-KW"/>
</dbReference>
<dbReference type="GO" id="GO:0045893">
    <property type="term" value="P:positive regulation of DNA-templated transcription"/>
    <property type="evidence" value="ECO:0007669"/>
    <property type="project" value="InterPro"/>
</dbReference>
<dbReference type="InterPro" id="IPR007532">
    <property type="entry name" value="Poxvirus_early-TF_lsu"/>
</dbReference>
<dbReference type="Pfam" id="PF04441">
    <property type="entry name" value="Pox_VERT_large"/>
    <property type="match status" value="1"/>
</dbReference>
<reference key="1">
    <citation type="journal article" date="1999" name="Virology">
        <title>The complete DNA sequence of myxoma virus.</title>
        <authorList>
            <person name="Cameron C."/>
            <person name="Hota-Mitchell S."/>
            <person name="Chen L."/>
            <person name="Barrett J.W."/>
            <person name="Cao J.-X."/>
            <person name="Macaulay C."/>
            <person name="Willer D.O."/>
            <person name="Evans D.H."/>
            <person name="McFadden G."/>
        </authorList>
    </citation>
    <scope>NUCLEOTIDE SEQUENCE [LARGE SCALE GENOMIC DNA]</scope>
</reference>
<organismHost>
    <name type="scientific">Oryctolagus cuniculus</name>
    <name type="common">Rabbit</name>
    <dbReference type="NCBI Taxonomy" id="9986"/>
</organismHost>
<accession>Q9Q8K4</accession>
<organism>
    <name type="scientific">Myxoma virus (strain Lausanne)</name>
    <name type="common">MYXV</name>
    <dbReference type="NCBI Taxonomy" id="31530"/>
    <lineage>
        <taxon>Viruses</taxon>
        <taxon>Varidnaviria</taxon>
        <taxon>Bamfordvirae</taxon>
        <taxon>Nucleocytoviricota</taxon>
        <taxon>Pokkesviricetes</taxon>
        <taxon>Chitovirales</taxon>
        <taxon>Poxviridae</taxon>
        <taxon>Chordopoxvirinae</taxon>
        <taxon>Leporipoxvirus</taxon>
        <taxon>Myxoma virus</taxon>
    </lineage>
</organism>
<name>ETF2_MYXVL</name>
<gene>
    <name type="primary">VETFL</name>
    <name type="ordered locus">m096L</name>
</gene>
<sequence length="711" mass="82688">MRYVVNPQLVLYVEKGQKIKRALYLTPYGTLDDKSPIYYFLSTHLKITDPEVHKRHILLTLKISQLKGYLCDLLRIRNDVIIYSHKNNLEYSYVDNTIFNPFAHTQKKTLIKSDGFLYNIYPDACDFLVIWVADAEDTSIAEFGSYEDVDVNILKFETRLLEVFDDLDLDMTIESKFNNIFRTNLKFTGLRKLIKKINEFNGSRYKSLLYKSDEYFINLTGNKFILTDERLNLTVWDSDGVVTFSSDGDTIMINNVKLFTSLLTDIDLQMERIKGDVTYKIFLSTPITSRIKLNIETSFIFVETATNNILLSADKRISIILAKNHISIKVKNYIPNIEKYFTFLVIAINSMFNNIQQASDFTKVETVYWSRICQNTKNKHRKPVIVSSLDEDMEKVSDNFYKSSTKEVFINSSGIMFSCLDPLNKYNYVGFLSIFYRLQKMCIPCCFLKNQSHTETFSSCVYQKEIASDVINPYILNFGKVVTKSKISFLPIIFDSFFNEGVKIIFEQDNKRLKETIGYHVIKSCDEDIKRLRTISDIIAFVNEDKNILIAEDIIYFPMNYVDIGTRVYILIQEIVHEIVVVKKHMSKDAIEVFPPNYKLVKNLFPRQTKFITIRSDSGMELTTDGFLVDGKEFNVDLSSNYVAFTKNITTPYTLSKYFSPLFKYAITESKNRFMKTWLINTMLRLGIDLDLDTNILPKLEKYYPNHGKSV</sequence>
<comment type="function">
    <text evidence="1">Acts with RNA polymerase to initiate transcription from early gene promoters. Is recruited by the RPO-associated protein of 94 kDa (RAP94) to form the early transcription complex, which also contains the core RNA polymerase. ETF heterodimer binds to early gene promoters (By similarity).</text>
</comment>
<comment type="subunit">
    <text evidence="1">Heterodimer of a 70 kDa and a 82 kDa subunit. Part of the early transcription complex composed of ETF, RAP94, and the DNA-directed RNA polymerase (By similarity).</text>
</comment>
<comment type="subcellular location">
    <subcellularLocation>
        <location evidence="1">Virion</location>
    </subcellularLocation>
    <text evidence="1">All the enzymes and other proteins required to synthesize early mRNAs are packaged within the virion core along with the DNA genome. This is necessary because viral early mRNAs are synthesized within minutes after virus entry into the cell and are extruded through pores in the core particle (By similarity).</text>
</comment>
<comment type="similarity">
    <text evidence="2">Belongs to the poxviridae VETF large subunit family.</text>
</comment>
<proteinExistence type="inferred from homology"/>
<feature type="chain" id="PRO_0000099087" description="Early transcription factor 82 kDa subunit">
    <location>
        <begin position="1"/>
        <end position="711"/>
    </location>
</feature>
<evidence type="ECO:0000250" key="1"/>
<evidence type="ECO:0000305" key="2"/>
<protein>
    <recommendedName>
        <fullName>Early transcription factor 82 kDa subunit</fullName>
    </recommendedName>
    <alternativeName>
        <fullName>ETF large subunit</fullName>
    </alternativeName>
</protein>